<organism>
    <name type="scientific">Bradyrhizobium diazoefficiens (strain JCM 10833 / BCRC 13528 / IAM 13628 / NBRC 14792 / USDA 110)</name>
    <dbReference type="NCBI Taxonomy" id="224911"/>
    <lineage>
        <taxon>Bacteria</taxon>
        <taxon>Pseudomonadati</taxon>
        <taxon>Pseudomonadota</taxon>
        <taxon>Alphaproteobacteria</taxon>
        <taxon>Hyphomicrobiales</taxon>
        <taxon>Nitrobacteraceae</taxon>
        <taxon>Bradyrhizobium</taxon>
    </lineage>
</organism>
<reference key="1">
    <citation type="journal article" date="2002" name="DNA Res.">
        <title>Complete genomic sequence of nitrogen-fixing symbiotic bacterium Bradyrhizobium japonicum USDA110.</title>
        <authorList>
            <person name="Kaneko T."/>
            <person name="Nakamura Y."/>
            <person name="Sato S."/>
            <person name="Minamisawa K."/>
            <person name="Uchiumi T."/>
            <person name="Sasamoto S."/>
            <person name="Watanabe A."/>
            <person name="Idesawa K."/>
            <person name="Iriguchi M."/>
            <person name="Kawashima K."/>
            <person name="Kohara M."/>
            <person name="Matsumoto M."/>
            <person name="Shimpo S."/>
            <person name="Tsuruoka H."/>
            <person name="Wada T."/>
            <person name="Yamada M."/>
            <person name="Tabata S."/>
        </authorList>
    </citation>
    <scope>NUCLEOTIDE SEQUENCE [LARGE SCALE GENOMIC DNA]</scope>
    <source>
        <strain>JCM 10833 / BCRC 13528 / IAM 13628 / NBRC 14792 / USDA 110</strain>
    </source>
</reference>
<name>YIDD_BRADU</name>
<evidence type="ECO:0000255" key="1">
    <source>
        <dbReference type="HAMAP-Rule" id="MF_00386"/>
    </source>
</evidence>
<protein>
    <recommendedName>
        <fullName evidence="1">Putative membrane protein insertion efficiency factor</fullName>
    </recommendedName>
</protein>
<comment type="function">
    <text evidence="1">Could be involved in insertion of integral membrane proteins into the membrane.</text>
</comment>
<comment type="subcellular location">
    <subcellularLocation>
        <location evidence="1">Cell inner membrane</location>
        <topology evidence="1">Peripheral membrane protein</topology>
        <orientation evidence="1">Cytoplasmic side</orientation>
    </subcellularLocation>
</comment>
<comment type="similarity">
    <text evidence="1">Belongs to the UPF0161 family.</text>
</comment>
<accession>Q89IV9</accession>
<feature type="chain" id="PRO_0000171800" description="Putative membrane protein insertion efficiency factor">
    <location>
        <begin position="1"/>
        <end position="112"/>
    </location>
</feature>
<sequence>MKHSACEHCSTPVEGALRLPRRFGRALIWLYRHTLSPLVGYNCRHLPTCSVYGDEAIERFGLWAGGWMTLARLLRCNPFGTSGIDNVPLAAPQDARWYLPWRYGRWRGVNAP</sequence>
<proteinExistence type="inferred from homology"/>
<dbReference type="EMBL" id="BA000040">
    <property type="protein sequence ID" value="BAC50790.1"/>
    <property type="molecule type" value="Genomic_DNA"/>
</dbReference>
<dbReference type="RefSeq" id="NP_772165.1">
    <property type="nucleotide sequence ID" value="NC_004463.1"/>
</dbReference>
<dbReference type="RefSeq" id="WP_011088273.1">
    <property type="nucleotide sequence ID" value="NC_004463.1"/>
</dbReference>
<dbReference type="FunCoup" id="Q89IV9">
    <property type="interactions" value="358"/>
</dbReference>
<dbReference type="STRING" id="224911.AAV28_25095"/>
<dbReference type="EnsemblBacteria" id="BAC50790">
    <property type="protein sequence ID" value="BAC50790"/>
    <property type="gene ID" value="BAC50790"/>
</dbReference>
<dbReference type="GeneID" id="46492526"/>
<dbReference type="KEGG" id="bja:blr5525"/>
<dbReference type="PATRIC" id="fig|224911.44.peg.5442"/>
<dbReference type="eggNOG" id="COG0759">
    <property type="taxonomic scope" value="Bacteria"/>
</dbReference>
<dbReference type="HOGENOM" id="CLU_144811_0_0_5"/>
<dbReference type="InParanoid" id="Q89IV9"/>
<dbReference type="OrthoDB" id="9801753at2"/>
<dbReference type="PhylomeDB" id="Q89IV9"/>
<dbReference type="Proteomes" id="UP000002526">
    <property type="component" value="Chromosome"/>
</dbReference>
<dbReference type="GO" id="GO:0005886">
    <property type="term" value="C:plasma membrane"/>
    <property type="evidence" value="ECO:0007669"/>
    <property type="project" value="UniProtKB-SubCell"/>
</dbReference>
<dbReference type="HAMAP" id="MF_00386">
    <property type="entry name" value="UPF0161_YidD"/>
    <property type="match status" value="1"/>
</dbReference>
<dbReference type="InterPro" id="IPR002696">
    <property type="entry name" value="Membr_insert_effic_factor_YidD"/>
</dbReference>
<dbReference type="NCBIfam" id="TIGR00278">
    <property type="entry name" value="membrane protein insertion efficiency factor YidD"/>
    <property type="match status" value="1"/>
</dbReference>
<dbReference type="PANTHER" id="PTHR33383">
    <property type="entry name" value="MEMBRANE PROTEIN INSERTION EFFICIENCY FACTOR-RELATED"/>
    <property type="match status" value="1"/>
</dbReference>
<dbReference type="PANTHER" id="PTHR33383:SF1">
    <property type="entry name" value="MEMBRANE PROTEIN INSERTION EFFICIENCY FACTOR-RELATED"/>
    <property type="match status" value="1"/>
</dbReference>
<dbReference type="Pfam" id="PF01809">
    <property type="entry name" value="YidD"/>
    <property type="match status" value="1"/>
</dbReference>
<dbReference type="SMART" id="SM01234">
    <property type="entry name" value="Haemolytic"/>
    <property type="match status" value="1"/>
</dbReference>
<keyword id="KW-0997">Cell inner membrane</keyword>
<keyword id="KW-1003">Cell membrane</keyword>
<keyword id="KW-0472">Membrane</keyword>
<keyword id="KW-1185">Reference proteome</keyword>
<gene>
    <name type="ordered locus">blr5525</name>
</gene>